<dbReference type="EMBL" id="X57715">
    <property type="protein sequence ID" value="CAA40886.1"/>
    <property type="molecule type" value="Genomic_DNA"/>
</dbReference>
<dbReference type="EMBL" id="X00869">
    <property type="protein sequence ID" value="CAA25414.1"/>
    <property type="molecule type" value="mRNA"/>
</dbReference>
<dbReference type="EMBL" id="M34926">
    <property type="protein sequence ID" value="AAA29183.1"/>
    <property type="molecule type" value="mRNA"/>
</dbReference>
<dbReference type="PIR" id="S14104">
    <property type="entry name" value="EWWKEC"/>
</dbReference>
<dbReference type="GO" id="GO:0005576">
    <property type="term" value="C:extracellular region"/>
    <property type="evidence" value="ECO:0007669"/>
    <property type="project" value="UniProtKB-SubCell"/>
</dbReference>
<dbReference type="GO" id="GO:0042742">
    <property type="term" value="P:defense response to bacterium"/>
    <property type="evidence" value="ECO:0007669"/>
    <property type="project" value="UniProtKB-KW"/>
</dbReference>
<dbReference type="GO" id="GO:0045087">
    <property type="term" value="P:innate immune response"/>
    <property type="evidence" value="ECO:0007669"/>
    <property type="project" value="UniProtKB-KW"/>
</dbReference>
<dbReference type="InterPro" id="IPR005521">
    <property type="entry name" value="Attacin_C"/>
</dbReference>
<dbReference type="InterPro" id="IPR005520">
    <property type="entry name" value="Attacin_N"/>
</dbReference>
<dbReference type="Pfam" id="PF03769">
    <property type="entry name" value="Attacin_C"/>
    <property type="match status" value="1"/>
</dbReference>
<dbReference type="Pfam" id="PF03768">
    <property type="entry name" value="Attacin_N"/>
    <property type="match status" value="1"/>
</dbReference>
<dbReference type="SUPFAM" id="SSF56935">
    <property type="entry name" value="Porins"/>
    <property type="match status" value="1"/>
</dbReference>
<evidence type="ECO:0000255" key="1"/>
<evidence type="ECO:0000269" key="2">
    <source>
    </source>
</evidence>
<evidence type="ECO:0000305" key="3"/>
<organism>
    <name type="scientific">Hyalophora cecropia</name>
    <name type="common">Cecropia moth</name>
    <name type="synonym">Samia cecropia</name>
    <dbReference type="NCBI Taxonomy" id="7123"/>
    <lineage>
        <taxon>Eukaryota</taxon>
        <taxon>Metazoa</taxon>
        <taxon>Ecdysozoa</taxon>
        <taxon>Arthropoda</taxon>
        <taxon>Hexapoda</taxon>
        <taxon>Insecta</taxon>
        <taxon>Pterygota</taxon>
        <taxon>Neoptera</taxon>
        <taxon>Endopterygota</taxon>
        <taxon>Lepidoptera</taxon>
        <taxon>Glossata</taxon>
        <taxon>Ditrysia</taxon>
        <taxon>Bombycoidea</taxon>
        <taxon>Saturniidae</taxon>
        <taxon>Saturniinae</taxon>
        <taxon>Attacini</taxon>
        <taxon>Hyalophora</taxon>
    </lineage>
</organism>
<proteinExistence type="evidence at protein level"/>
<protein>
    <recommendedName>
        <fullName>Attacin-E</fullName>
    </recommendedName>
    <alternativeName>
        <fullName>Immune protein P5</fullName>
    </alternativeName>
    <component>
        <recommendedName>
            <fullName>Attacin-F</fullName>
        </recommendedName>
    </component>
</protein>
<accession>P01513</accession>
<sequence length="235" mass="25438">MFGKIVFLLLVALCAGVQSRYLIVSEPVYYIEHYEEPELLASSRVRRDAHGALTLNSDGTSGAVVKVPFAGNDKNIVSAIGSVDLTDRQKLGAATAGVALDNINGHGLSLTDTHIPGFGDKMTAAGKVNVFHNDNHDITAKAFATRNMPDIANVPNFNTVGGGIDYMFKDKIGASASAAHTDFINRNDYSLDGKLNLFKTPDTSIDFNAGFKKFDTPFMKSSWEPNFGFSLSKYF</sequence>
<reference key="1">
    <citation type="journal article" date="1991" name="Eur. J. Biochem.">
        <title>Structure and expression of the attacin genes in Hyalophora cecropia.</title>
        <authorList>
            <person name="Sun S.C."/>
            <person name="Lindstroem I."/>
            <person name="Lee J.-Y."/>
            <person name="Faye I."/>
        </authorList>
    </citation>
    <scope>NUCLEOTIDE SEQUENCE</scope>
</reference>
<reference key="2">
    <citation type="journal article" date="1984" name="EMBO J.">
        <title>Insect immunity. Isolation and sequence of two cDNA clones corresponding to acidic and basic attacins from Hyalophora cecropia.</title>
        <authorList>
            <person name="Kockum K."/>
            <person name="Faye I."/>
            <person name="von Hofsten P."/>
            <person name="Lee J.-Y."/>
            <person name="Xanthopoulos K.G."/>
            <person name="Boman H.G."/>
        </authorList>
    </citation>
    <scope>NUCLEOTIDE SEQUENCE OF 48-235</scope>
</reference>
<reference key="3">
    <citation type="journal article" date="1985" name="Dev. Comp. Immunol.">
        <title>On the primary structures of lysozyme, cecropins and attacins from Hyalophora cecropia.</title>
        <authorList>
            <person name="Boman H.G."/>
            <person name="Faye I."/>
            <person name="von Hofsten P."/>
            <person name="Kockum K."/>
            <person name="Lee J.-Y."/>
            <person name="Xanthopoulos K.G."/>
            <person name="Bennich H."/>
            <person name="Engstroem A."/>
            <person name="Merrifield R.B."/>
            <person name="Andreu D."/>
        </authorList>
    </citation>
    <scope>NUCLEOTIDE SEQUENCE OF 48-235</scope>
</reference>
<reference key="4">
    <citation type="journal article" date="1984" name="EMBO J.">
        <title>Insect immunity. The primary structure of the antibacterial protein attacin F and its relation to two native attacins from Hyalophora cecropia.</title>
        <authorList>
            <person name="Engstroem A."/>
            <person name="Engstroem P."/>
            <person name="Tao Z.-J."/>
            <person name="Carlsson A."/>
            <person name="Bennich H."/>
        </authorList>
    </citation>
    <scope>PROTEIN SEQUENCE OF 48-231</scope>
</reference>
<keyword id="KW-0044">Antibiotic</keyword>
<keyword id="KW-0929">Antimicrobial</keyword>
<keyword id="KW-0165">Cleavage on pair of basic residues</keyword>
<keyword id="KW-0903">Direct protein sequencing</keyword>
<keyword id="KW-0391">Immunity</keyword>
<keyword id="KW-0399">Innate immunity</keyword>
<keyword id="KW-0677">Repeat</keyword>
<keyword id="KW-0964">Secreted</keyword>
<keyword id="KW-0732">Signal</keyword>
<comment type="function">
    <text>Hemolymph antibacterial protein.</text>
</comment>
<comment type="subcellular location">
    <subcellularLocation>
        <location>Secreted</location>
    </subcellularLocation>
</comment>
<comment type="PTM">
    <text>Attacin F appears to be derived by proteolytic digestion of attacin E.</text>
</comment>
<comment type="miscellaneous">
    <text>There are six forms of attacin that are divided into two groups: acidic (E and F) and basic (A, B, C, and D).</text>
</comment>
<comment type="similarity">
    <text evidence="3">Belongs to the attacin/sarcotoxin-2 family.</text>
</comment>
<feature type="signal peptide" evidence="1">
    <location>
        <begin position="1"/>
        <end position="19"/>
    </location>
</feature>
<feature type="propeptide" id="PRO_0000004902" evidence="2">
    <location>
        <begin position="20"/>
        <end position="47"/>
    </location>
</feature>
<feature type="chain" id="PRO_0000004903" description="Attacin-E">
    <location>
        <begin position="48"/>
        <end position="235"/>
    </location>
</feature>
<feature type="chain" id="PRO_0000004904" description="Attacin-F">
    <location>
        <begin position="48"/>
        <end position="231"/>
    </location>
</feature>
<name>ATTE_HYACE</name>